<comment type="subcellular location">
    <subcellularLocation>
        <location>Plastid</location>
        <location>Chloroplast</location>
    </subcellularLocation>
</comment>
<comment type="similarity">
    <text evidence="1">Belongs to the bacterial ribosomal protein bS16 family.</text>
</comment>
<proteinExistence type="inferred from homology"/>
<name>RR16_EUCGG</name>
<evidence type="ECO:0000255" key="1">
    <source>
        <dbReference type="HAMAP-Rule" id="MF_00385"/>
    </source>
</evidence>
<evidence type="ECO:0000305" key="2"/>
<organism>
    <name type="scientific">Eucalyptus globulus subsp. globulus</name>
    <name type="common">Tasmanian blue gum</name>
    <dbReference type="NCBI Taxonomy" id="71271"/>
    <lineage>
        <taxon>Eukaryota</taxon>
        <taxon>Viridiplantae</taxon>
        <taxon>Streptophyta</taxon>
        <taxon>Embryophyta</taxon>
        <taxon>Tracheophyta</taxon>
        <taxon>Spermatophyta</taxon>
        <taxon>Magnoliopsida</taxon>
        <taxon>eudicotyledons</taxon>
        <taxon>Gunneridae</taxon>
        <taxon>Pentapetalae</taxon>
        <taxon>rosids</taxon>
        <taxon>malvids</taxon>
        <taxon>Myrtales</taxon>
        <taxon>Myrtaceae</taxon>
        <taxon>Myrtoideae</taxon>
        <taxon>Eucalypteae</taxon>
        <taxon>Eucalyptus</taxon>
    </lineage>
</organism>
<accession>Q49L16</accession>
<sequence length="77" mass="8900">MVKLRLKRCGRKQPVYRIVAIDVRSRREGRDLRKVGFYDPINNQTYLNIPAILFFLEKGAQPTGTVYDILKKAGVSF</sequence>
<keyword id="KW-0150">Chloroplast</keyword>
<keyword id="KW-0934">Plastid</keyword>
<keyword id="KW-0687">Ribonucleoprotein</keyword>
<keyword id="KW-0689">Ribosomal protein</keyword>
<geneLocation type="chloroplast"/>
<protein>
    <recommendedName>
        <fullName evidence="1">Small ribosomal subunit protein bS16c</fullName>
    </recommendedName>
    <alternativeName>
        <fullName evidence="2">30S ribosomal protein S16, chloroplastic</fullName>
    </alternativeName>
</protein>
<gene>
    <name evidence="1" type="primary">rps16</name>
</gene>
<dbReference type="EMBL" id="AY780259">
    <property type="protein sequence ID" value="AAX21011.1"/>
    <property type="molecule type" value="Genomic_DNA"/>
</dbReference>
<dbReference type="RefSeq" id="YP_636281.1">
    <property type="nucleotide sequence ID" value="NC_008115.1"/>
</dbReference>
<dbReference type="SMR" id="Q49L16"/>
<dbReference type="GeneID" id="4108470"/>
<dbReference type="GO" id="GO:0009507">
    <property type="term" value="C:chloroplast"/>
    <property type="evidence" value="ECO:0007669"/>
    <property type="project" value="UniProtKB-SubCell"/>
</dbReference>
<dbReference type="GO" id="GO:0005739">
    <property type="term" value="C:mitochondrion"/>
    <property type="evidence" value="ECO:0007669"/>
    <property type="project" value="GOC"/>
</dbReference>
<dbReference type="GO" id="GO:0015935">
    <property type="term" value="C:small ribosomal subunit"/>
    <property type="evidence" value="ECO:0007669"/>
    <property type="project" value="TreeGrafter"/>
</dbReference>
<dbReference type="GO" id="GO:0003735">
    <property type="term" value="F:structural constituent of ribosome"/>
    <property type="evidence" value="ECO:0007669"/>
    <property type="project" value="InterPro"/>
</dbReference>
<dbReference type="GO" id="GO:0032543">
    <property type="term" value="P:mitochondrial translation"/>
    <property type="evidence" value="ECO:0007669"/>
    <property type="project" value="TreeGrafter"/>
</dbReference>
<dbReference type="FunFam" id="3.30.1320.10:FF:000003">
    <property type="entry name" value="30S ribosomal protein S16, chloroplastic"/>
    <property type="match status" value="1"/>
</dbReference>
<dbReference type="Gene3D" id="3.30.1320.10">
    <property type="match status" value="1"/>
</dbReference>
<dbReference type="HAMAP" id="MF_00385">
    <property type="entry name" value="Ribosomal_bS16"/>
    <property type="match status" value="1"/>
</dbReference>
<dbReference type="InterPro" id="IPR000307">
    <property type="entry name" value="Ribosomal_bS16"/>
</dbReference>
<dbReference type="InterPro" id="IPR020592">
    <property type="entry name" value="Ribosomal_bS16_CS"/>
</dbReference>
<dbReference type="InterPro" id="IPR023803">
    <property type="entry name" value="Ribosomal_bS16_dom_sf"/>
</dbReference>
<dbReference type="NCBIfam" id="TIGR00002">
    <property type="entry name" value="S16"/>
    <property type="match status" value="1"/>
</dbReference>
<dbReference type="PANTHER" id="PTHR12919">
    <property type="entry name" value="30S RIBOSOMAL PROTEIN S16"/>
    <property type="match status" value="1"/>
</dbReference>
<dbReference type="PANTHER" id="PTHR12919:SF20">
    <property type="entry name" value="SMALL RIBOSOMAL SUBUNIT PROTEIN BS16M"/>
    <property type="match status" value="1"/>
</dbReference>
<dbReference type="Pfam" id="PF00886">
    <property type="entry name" value="Ribosomal_S16"/>
    <property type="match status" value="1"/>
</dbReference>
<dbReference type="SUPFAM" id="SSF54565">
    <property type="entry name" value="Ribosomal protein S16"/>
    <property type="match status" value="1"/>
</dbReference>
<dbReference type="PROSITE" id="PS00732">
    <property type="entry name" value="RIBOSOMAL_S16"/>
    <property type="match status" value="1"/>
</dbReference>
<feature type="chain" id="PRO_0000276945" description="Small ribosomal subunit protein bS16c">
    <location>
        <begin position="1"/>
        <end position="77"/>
    </location>
</feature>
<reference key="1">
    <citation type="journal article" date="2005" name="DNA Res.">
        <title>Complete nucleotide sequence of the chloroplast genome from the Tasmanian blue gum, Eucalyptus globulus (Myrtaceae).</title>
        <authorList>
            <person name="Steane D.A."/>
        </authorList>
    </citation>
    <scope>NUCLEOTIDE SEQUENCE [LARGE SCALE GENOMIC DNA]</scope>
</reference>